<reference key="1">
    <citation type="submission" date="2008-06" db="EMBL/GenBank/DDBJ databases">
        <title>Genome and proteome analysis of A. pleuropneumoniae serotype 7.</title>
        <authorList>
            <person name="Linke B."/>
            <person name="Buettner F."/>
            <person name="Martinez-Arias R."/>
            <person name="Goesmann A."/>
            <person name="Baltes N."/>
            <person name="Tegetmeyer H."/>
            <person name="Singh M."/>
            <person name="Gerlach G.F."/>
        </authorList>
    </citation>
    <scope>NUCLEOTIDE SEQUENCE [LARGE SCALE GENOMIC DNA]</scope>
    <source>
        <strain>AP76</strain>
    </source>
</reference>
<organism>
    <name type="scientific">Actinobacillus pleuropneumoniae serotype 7 (strain AP76)</name>
    <dbReference type="NCBI Taxonomy" id="537457"/>
    <lineage>
        <taxon>Bacteria</taxon>
        <taxon>Pseudomonadati</taxon>
        <taxon>Pseudomonadota</taxon>
        <taxon>Gammaproteobacteria</taxon>
        <taxon>Pasteurellales</taxon>
        <taxon>Pasteurellaceae</taxon>
        <taxon>Actinobacillus</taxon>
    </lineage>
</organism>
<name>RL5_ACTP7</name>
<protein>
    <recommendedName>
        <fullName evidence="1">Large ribosomal subunit protein uL5</fullName>
    </recommendedName>
    <alternativeName>
        <fullName evidence="2">50S ribosomal protein L5</fullName>
    </alternativeName>
</protein>
<proteinExistence type="inferred from homology"/>
<dbReference type="EMBL" id="CP001091">
    <property type="protein sequence ID" value="ACE62509.1"/>
    <property type="molecule type" value="Genomic_DNA"/>
</dbReference>
<dbReference type="RefSeq" id="WP_005619405.1">
    <property type="nucleotide sequence ID" value="NC_010939.1"/>
</dbReference>
<dbReference type="SMR" id="B3GZ23"/>
<dbReference type="GeneID" id="92743643"/>
<dbReference type="KEGG" id="apa:APP7_1857"/>
<dbReference type="HOGENOM" id="CLU_061015_2_1_6"/>
<dbReference type="Proteomes" id="UP000001226">
    <property type="component" value="Chromosome"/>
</dbReference>
<dbReference type="GO" id="GO:1990904">
    <property type="term" value="C:ribonucleoprotein complex"/>
    <property type="evidence" value="ECO:0007669"/>
    <property type="project" value="UniProtKB-KW"/>
</dbReference>
<dbReference type="GO" id="GO:0005840">
    <property type="term" value="C:ribosome"/>
    <property type="evidence" value="ECO:0007669"/>
    <property type="project" value="UniProtKB-KW"/>
</dbReference>
<dbReference type="GO" id="GO:0019843">
    <property type="term" value="F:rRNA binding"/>
    <property type="evidence" value="ECO:0007669"/>
    <property type="project" value="UniProtKB-UniRule"/>
</dbReference>
<dbReference type="GO" id="GO:0003735">
    <property type="term" value="F:structural constituent of ribosome"/>
    <property type="evidence" value="ECO:0007669"/>
    <property type="project" value="InterPro"/>
</dbReference>
<dbReference type="GO" id="GO:0000049">
    <property type="term" value="F:tRNA binding"/>
    <property type="evidence" value="ECO:0007669"/>
    <property type="project" value="UniProtKB-UniRule"/>
</dbReference>
<dbReference type="GO" id="GO:0006412">
    <property type="term" value="P:translation"/>
    <property type="evidence" value="ECO:0007669"/>
    <property type="project" value="UniProtKB-UniRule"/>
</dbReference>
<dbReference type="FunFam" id="3.30.1440.10:FF:000001">
    <property type="entry name" value="50S ribosomal protein L5"/>
    <property type="match status" value="1"/>
</dbReference>
<dbReference type="Gene3D" id="3.30.1440.10">
    <property type="match status" value="1"/>
</dbReference>
<dbReference type="HAMAP" id="MF_01333_B">
    <property type="entry name" value="Ribosomal_uL5_B"/>
    <property type="match status" value="1"/>
</dbReference>
<dbReference type="InterPro" id="IPR002132">
    <property type="entry name" value="Ribosomal_uL5"/>
</dbReference>
<dbReference type="InterPro" id="IPR020930">
    <property type="entry name" value="Ribosomal_uL5_bac-type"/>
</dbReference>
<dbReference type="InterPro" id="IPR031309">
    <property type="entry name" value="Ribosomal_uL5_C"/>
</dbReference>
<dbReference type="InterPro" id="IPR020929">
    <property type="entry name" value="Ribosomal_uL5_CS"/>
</dbReference>
<dbReference type="InterPro" id="IPR022803">
    <property type="entry name" value="Ribosomal_uL5_dom_sf"/>
</dbReference>
<dbReference type="InterPro" id="IPR031310">
    <property type="entry name" value="Ribosomal_uL5_N"/>
</dbReference>
<dbReference type="NCBIfam" id="NF000585">
    <property type="entry name" value="PRK00010.1"/>
    <property type="match status" value="1"/>
</dbReference>
<dbReference type="PANTHER" id="PTHR11994">
    <property type="entry name" value="60S RIBOSOMAL PROTEIN L11-RELATED"/>
    <property type="match status" value="1"/>
</dbReference>
<dbReference type="Pfam" id="PF00281">
    <property type="entry name" value="Ribosomal_L5"/>
    <property type="match status" value="1"/>
</dbReference>
<dbReference type="Pfam" id="PF00673">
    <property type="entry name" value="Ribosomal_L5_C"/>
    <property type="match status" value="1"/>
</dbReference>
<dbReference type="PIRSF" id="PIRSF002161">
    <property type="entry name" value="Ribosomal_L5"/>
    <property type="match status" value="1"/>
</dbReference>
<dbReference type="SUPFAM" id="SSF55282">
    <property type="entry name" value="RL5-like"/>
    <property type="match status" value="1"/>
</dbReference>
<dbReference type="PROSITE" id="PS00358">
    <property type="entry name" value="RIBOSOMAL_L5"/>
    <property type="match status" value="1"/>
</dbReference>
<gene>
    <name evidence="1" type="primary">rplE</name>
    <name type="ordered locus">APP7_1857</name>
</gene>
<comment type="function">
    <text evidence="1">This is one of the proteins that bind and probably mediate the attachment of the 5S RNA into the large ribosomal subunit, where it forms part of the central protuberance. In the 70S ribosome it contacts protein S13 of the 30S subunit (bridge B1b), connecting the 2 subunits; this bridge is implicated in subunit movement. Contacts the P site tRNA; the 5S rRNA and some of its associated proteins might help stabilize positioning of ribosome-bound tRNAs.</text>
</comment>
<comment type="subunit">
    <text evidence="1">Part of the 50S ribosomal subunit; part of the 5S rRNA/L5/L18/L25 subcomplex. Contacts the 5S rRNA and the P site tRNA. Forms a bridge to the 30S subunit in the 70S ribosome.</text>
</comment>
<comment type="similarity">
    <text evidence="1">Belongs to the universal ribosomal protein uL5 family.</text>
</comment>
<accession>B3GZ23</accession>
<feature type="chain" id="PRO_1000142345" description="Large ribosomal subunit protein uL5">
    <location>
        <begin position="1"/>
        <end position="179"/>
    </location>
</feature>
<evidence type="ECO:0000255" key="1">
    <source>
        <dbReference type="HAMAP-Rule" id="MF_01333"/>
    </source>
</evidence>
<evidence type="ECO:0000305" key="2"/>
<keyword id="KW-0687">Ribonucleoprotein</keyword>
<keyword id="KW-0689">Ribosomal protein</keyword>
<keyword id="KW-0694">RNA-binding</keyword>
<keyword id="KW-0699">rRNA-binding</keyword>
<keyword id="KW-0820">tRNA-binding</keyword>
<sequence>MAKLHDYYRDQVVNELKAKFNYSSVMQVPRIEKITLNMGVGEALTDKKLLDNAVADLTAISGQKPLITKARKSVAGFKIRQGYPIGCKVTLRGERMWEFFERLITIAVPRIRDFRGLNAKSFDGRGNYSMGVREQIIFPEIDYDKVDRVRGLDITITTTAKSDEEGQALLAAFNFPFRK</sequence>